<keyword id="KW-0903">Direct protein sequencing</keyword>
<keyword id="KW-1015">Disulfide bond</keyword>
<keyword id="KW-0872">Ion channel impairing toxin</keyword>
<keyword id="KW-0166">Nematocyst</keyword>
<keyword id="KW-0528">Neurotoxin</keyword>
<keyword id="KW-0964">Secreted</keyword>
<keyword id="KW-0800">Toxin</keyword>
<keyword id="KW-0738">Voltage-gated sodium channel impairing toxin</keyword>
<evidence type="ECO:0000250" key="1">
    <source>
        <dbReference type="UniProtKB" id="P19651"/>
    </source>
</evidence>
<evidence type="ECO:0000250" key="2">
    <source>
        <dbReference type="UniProtKB" id="P30832"/>
    </source>
</evidence>
<evidence type="ECO:0000269" key="3">
    <source>
    </source>
</evidence>
<evidence type="ECO:0000303" key="4">
    <source>
    </source>
</evidence>
<evidence type="ECO:0000303" key="5">
    <source>
    </source>
</evidence>
<evidence type="ECO:0000305" key="6"/>
<comment type="function">
    <text evidence="2">Binds to site 3 of voltage-gated sodium channels and inhibits the inactivation process.</text>
</comment>
<comment type="subcellular location">
    <subcellularLocation>
        <location evidence="3">Secreted</location>
    </subcellularLocation>
    <subcellularLocation>
        <location>Nematocyst</location>
    </subcellularLocation>
</comment>
<comment type="miscellaneous">
    <text evidence="6">A synonymy between H.magnifica and R.crispa is controversial.</text>
</comment>
<comment type="similarity">
    <text evidence="6">Belongs to the sea anemone sodium channel inhibitory toxin family. Type II subfamily.</text>
</comment>
<protein>
    <recommendedName>
        <fullName evidence="4">Delta-stichotoxin-Hcr1d</fullName>
        <shortName evidence="4">Delta-SHTX-Hcr1d</shortName>
    </recommendedName>
    <alternativeName>
        <fullName evidence="5">Neurotoxins V</fullName>
    </alternativeName>
    <alternativeName>
        <fullName>RTX-V</fullName>
    </alternativeName>
    <alternativeName>
        <fullName>Rm5</fullName>
    </alternativeName>
</protein>
<reference key="1">
    <citation type="journal article" date="1988" name="Bioorg. Khim.">
        <title>Amino acid sequence of neurotoxins IV and V from the sea anemone Radianthus macrodactylus.</title>
        <authorList>
            <person name="Zykova T.A."/>
            <person name="Kozlovskaya E.P."/>
            <person name="Elyakov G.B."/>
        </authorList>
    </citation>
    <scope>PROTEIN SEQUENCE</scope>
    <scope>SUBCELLULAR LOCATION</scope>
    <source>
        <tissue>Nematoblast</tissue>
    </source>
</reference>
<reference key="2">
    <citation type="journal article" date="2012" name="Toxicon">
        <title>Development of a rational nomenclature for naming peptide and protein toxins from sea anemones.</title>
        <authorList>
            <person name="Oliveira J.S."/>
            <person name="Fuentes-Silva D."/>
            <person name="King G.F."/>
        </authorList>
    </citation>
    <scope>NOMENCLATURE</scope>
</reference>
<sequence length="47" mass="5209">GNCKCDDEGPNVRTAPLTGYVDLGYCNEGWEKCASYYSPIAECCRKK</sequence>
<feature type="chain" id="PRO_0000221526" description="Delta-stichotoxin-Hcr1d" evidence="3">
    <location>
        <begin position="1"/>
        <end position="47"/>
    </location>
</feature>
<feature type="disulfide bond" evidence="1">
    <location>
        <begin position="3"/>
        <end position="43"/>
    </location>
</feature>
<feature type="disulfide bond" evidence="1">
    <location>
        <begin position="5"/>
        <end position="33"/>
    </location>
</feature>
<feature type="disulfide bond" evidence="1">
    <location>
        <begin position="26"/>
        <end position="44"/>
    </location>
</feature>
<name>NA25_RADCR</name>
<organism>
    <name type="scientific">Radianthus crispa</name>
    <name type="common">Leathery sea anemone</name>
    <name type="synonym">Heteractis crispa</name>
    <dbReference type="NCBI Taxonomy" id="3122430"/>
    <lineage>
        <taxon>Eukaryota</taxon>
        <taxon>Metazoa</taxon>
        <taxon>Cnidaria</taxon>
        <taxon>Anthozoa</taxon>
        <taxon>Hexacorallia</taxon>
        <taxon>Actiniaria</taxon>
        <taxon>Stichodactylidae</taxon>
        <taxon>Radianthus</taxon>
    </lineage>
</organism>
<accession>P30785</accession>
<proteinExistence type="evidence at protein level"/>
<dbReference type="PIR" id="JN0424">
    <property type="entry name" value="JN0424"/>
</dbReference>
<dbReference type="BMRB" id="P30785"/>
<dbReference type="SMR" id="P30785"/>
<dbReference type="GO" id="GO:0005576">
    <property type="term" value="C:extracellular region"/>
    <property type="evidence" value="ECO:0007669"/>
    <property type="project" value="UniProtKB-SubCell"/>
</dbReference>
<dbReference type="GO" id="GO:0042151">
    <property type="term" value="C:nematocyst"/>
    <property type="evidence" value="ECO:0007669"/>
    <property type="project" value="UniProtKB-SubCell"/>
</dbReference>
<dbReference type="GO" id="GO:0017080">
    <property type="term" value="F:sodium channel regulator activity"/>
    <property type="evidence" value="ECO:0007669"/>
    <property type="project" value="UniProtKB-KW"/>
</dbReference>
<dbReference type="GO" id="GO:0090729">
    <property type="term" value="F:toxin activity"/>
    <property type="evidence" value="ECO:0007669"/>
    <property type="project" value="UniProtKB-KW"/>
</dbReference>
<dbReference type="GO" id="GO:0009966">
    <property type="term" value="P:regulation of signal transduction"/>
    <property type="evidence" value="ECO:0007669"/>
    <property type="project" value="InterPro"/>
</dbReference>
<dbReference type="Gene3D" id="2.20.20.10">
    <property type="entry name" value="Anthopleurin-A"/>
    <property type="match status" value="1"/>
</dbReference>
<dbReference type="InterPro" id="IPR000693">
    <property type="entry name" value="Anenome_toxin"/>
</dbReference>
<dbReference type="InterPro" id="IPR023355">
    <property type="entry name" value="Myo_ane_neurotoxin_sf"/>
</dbReference>
<dbReference type="Pfam" id="PF00706">
    <property type="entry name" value="Toxin_4"/>
    <property type="match status" value="1"/>
</dbReference>
<dbReference type="PIRSF" id="PIRSF001905">
    <property type="entry name" value="Anenome_toxin"/>
    <property type="match status" value="1"/>
</dbReference>
<dbReference type="SUPFAM" id="SSF57392">
    <property type="entry name" value="Defensin-like"/>
    <property type="match status" value="1"/>
</dbReference>